<comment type="function">
    <text evidence="2">Purine nucleoside enzyme that catalyzes the phosphorolysis of adenosine and inosine nucleosides, yielding D-ribose 1-phosphate and the respective free bases, adenine and hypoxanthine. Also catalyzes the phosphorolysis of S-methyl-5'-thioadenosine into adenine and S-methyl-5-thio-alpha-D-ribose 1-phosphate. Also has adenosine deaminase activity.</text>
</comment>
<comment type="catalytic activity">
    <reaction evidence="2">
        <text>adenosine + phosphate = alpha-D-ribose 1-phosphate + adenine</text>
        <dbReference type="Rhea" id="RHEA:27642"/>
        <dbReference type="ChEBI" id="CHEBI:16335"/>
        <dbReference type="ChEBI" id="CHEBI:16708"/>
        <dbReference type="ChEBI" id="CHEBI:43474"/>
        <dbReference type="ChEBI" id="CHEBI:57720"/>
        <dbReference type="EC" id="2.4.2.1"/>
    </reaction>
    <physiologicalReaction direction="left-to-right" evidence="2">
        <dbReference type="Rhea" id="RHEA:27643"/>
    </physiologicalReaction>
</comment>
<comment type="catalytic activity">
    <reaction evidence="2">
        <text>S-methyl-5'-thioadenosine + phosphate = 5-(methylsulfanyl)-alpha-D-ribose 1-phosphate + adenine</text>
        <dbReference type="Rhea" id="RHEA:11852"/>
        <dbReference type="ChEBI" id="CHEBI:16708"/>
        <dbReference type="ChEBI" id="CHEBI:17509"/>
        <dbReference type="ChEBI" id="CHEBI:43474"/>
        <dbReference type="ChEBI" id="CHEBI:58533"/>
        <dbReference type="EC" id="2.4.2.28"/>
    </reaction>
    <physiologicalReaction direction="left-to-right" evidence="2">
        <dbReference type="Rhea" id="RHEA:11853"/>
    </physiologicalReaction>
</comment>
<comment type="catalytic activity">
    <reaction evidence="2">
        <text>inosine + phosphate = alpha-D-ribose 1-phosphate + hypoxanthine</text>
        <dbReference type="Rhea" id="RHEA:27646"/>
        <dbReference type="ChEBI" id="CHEBI:17368"/>
        <dbReference type="ChEBI" id="CHEBI:17596"/>
        <dbReference type="ChEBI" id="CHEBI:43474"/>
        <dbReference type="ChEBI" id="CHEBI:57720"/>
        <dbReference type="EC" id="2.4.2.1"/>
    </reaction>
    <physiologicalReaction direction="left-to-right" evidence="2">
        <dbReference type="Rhea" id="RHEA:27647"/>
    </physiologicalReaction>
</comment>
<comment type="catalytic activity">
    <reaction evidence="2">
        <text>adenosine + H2O + H(+) = inosine + NH4(+)</text>
        <dbReference type="Rhea" id="RHEA:24408"/>
        <dbReference type="ChEBI" id="CHEBI:15377"/>
        <dbReference type="ChEBI" id="CHEBI:15378"/>
        <dbReference type="ChEBI" id="CHEBI:16335"/>
        <dbReference type="ChEBI" id="CHEBI:17596"/>
        <dbReference type="ChEBI" id="CHEBI:28938"/>
        <dbReference type="EC" id="3.5.4.4"/>
    </reaction>
    <physiologicalReaction direction="left-to-right" evidence="2">
        <dbReference type="Rhea" id="RHEA:24409"/>
    </physiologicalReaction>
</comment>
<comment type="cofactor">
    <cofactor evidence="1">
        <name>Cu(2+)</name>
        <dbReference type="ChEBI" id="CHEBI:29036"/>
    </cofactor>
    <cofactor evidence="2">
        <name>Zn(2+)</name>
        <dbReference type="ChEBI" id="CHEBI:29105"/>
    </cofactor>
</comment>
<comment type="subunit">
    <text evidence="3">Homodimer.</text>
</comment>
<comment type="similarity">
    <text evidence="4">Belongs to the purine nucleoside phosphorylase YfiH/LACC1 family.</text>
</comment>
<evidence type="ECO:0000250" key="1">
    <source>
        <dbReference type="UniProtKB" id="P33644"/>
    </source>
</evidence>
<evidence type="ECO:0000250" key="2">
    <source>
        <dbReference type="UniProtKB" id="P84138"/>
    </source>
</evidence>
<evidence type="ECO:0000250" key="3">
    <source>
        <dbReference type="UniProtKB" id="Q1EIR0"/>
    </source>
</evidence>
<evidence type="ECO:0000305" key="4"/>
<sequence>MKERFIKKTHYLDYQFDEHTDIKLGFTTRENGLSPYPNHSFNMARYISDSAHHITHHQDILANLIGYPRDEWVFPIQTHDNRIVEVTSEHKGTNIDKLTDDLHGIDGMYTFDSHILLTMCYADCVPVYFYSESHGYIGLAHAGWRGTYGQIVKEMLKKVDFDYEDLKIVIGPATSNSYEINDDIKNKFEELTIDSTLYIESRGKNKHGIDLKKANALLLEEAGVPSKNIYITEYSTSENLDLFFSYRVEKGQTGRMLAFIGRK</sequence>
<dbReference type="EC" id="2.4.2.1" evidence="2"/>
<dbReference type="EC" id="3.5.4.4" evidence="2"/>
<dbReference type="EC" id="2.4.2.28" evidence="2"/>
<dbReference type="EMBL" id="CP000029">
    <property type="protein sequence ID" value="AAW54140.1"/>
    <property type="molecule type" value="Genomic_DNA"/>
</dbReference>
<dbReference type="SMR" id="Q5HQ05"/>
<dbReference type="STRING" id="176279.SERP0752"/>
<dbReference type="KEGG" id="ser:SERP0752"/>
<dbReference type="eggNOG" id="COG1496">
    <property type="taxonomic scope" value="Bacteria"/>
</dbReference>
<dbReference type="HOGENOM" id="CLU_065784_0_1_9"/>
<dbReference type="Proteomes" id="UP000000531">
    <property type="component" value="Chromosome"/>
</dbReference>
<dbReference type="GO" id="GO:0004000">
    <property type="term" value="F:adenosine deaminase activity"/>
    <property type="evidence" value="ECO:0007669"/>
    <property type="project" value="RHEA"/>
</dbReference>
<dbReference type="GO" id="GO:0005507">
    <property type="term" value="F:copper ion binding"/>
    <property type="evidence" value="ECO:0007669"/>
    <property type="project" value="TreeGrafter"/>
</dbReference>
<dbReference type="GO" id="GO:0016491">
    <property type="term" value="F:oxidoreductase activity"/>
    <property type="evidence" value="ECO:0007669"/>
    <property type="project" value="UniProtKB-KW"/>
</dbReference>
<dbReference type="GO" id="GO:0017061">
    <property type="term" value="F:S-methyl-5-thioadenosine phosphorylase activity"/>
    <property type="evidence" value="ECO:0007669"/>
    <property type="project" value="UniProtKB-EC"/>
</dbReference>
<dbReference type="CDD" id="cd16833">
    <property type="entry name" value="YfiH"/>
    <property type="match status" value="1"/>
</dbReference>
<dbReference type="Gene3D" id="3.60.140.10">
    <property type="entry name" value="CNF1/YfiH-like putative cysteine hydrolases"/>
    <property type="match status" value="1"/>
</dbReference>
<dbReference type="InterPro" id="IPR003730">
    <property type="entry name" value="Cu_polyphenol_OxRdtase"/>
</dbReference>
<dbReference type="InterPro" id="IPR038371">
    <property type="entry name" value="Cu_polyphenol_OxRdtase_sf"/>
</dbReference>
<dbReference type="InterPro" id="IPR011324">
    <property type="entry name" value="Cytotoxic_necrot_fac-like_cat"/>
</dbReference>
<dbReference type="NCBIfam" id="TIGR00726">
    <property type="entry name" value="peptidoglycan editing factor PgeF"/>
    <property type="match status" value="1"/>
</dbReference>
<dbReference type="PANTHER" id="PTHR30616:SF2">
    <property type="entry name" value="PURINE NUCLEOSIDE PHOSPHORYLASE LACC1"/>
    <property type="match status" value="1"/>
</dbReference>
<dbReference type="PANTHER" id="PTHR30616">
    <property type="entry name" value="UNCHARACTERIZED PROTEIN YFIH"/>
    <property type="match status" value="1"/>
</dbReference>
<dbReference type="Pfam" id="PF02578">
    <property type="entry name" value="Cu-oxidase_4"/>
    <property type="match status" value="1"/>
</dbReference>
<dbReference type="SUPFAM" id="SSF64438">
    <property type="entry name" value="CNF1/YfiH-like putative cysteine hydrolases"/>
    <property type="match status" value="1"/>
</dbReference>
<reference key="1">
    <citation type="journal article" date="2005" name="J. Bacteriol.">
        <title>Insights on evolution of virulence and resistance from the complete genome analysis of an early methicillin-resistant Staphylococcus aureus strain and a biofilm-producing methicillin-resistant Staphylococcus epidermidis strain.</title>
        <authorList>
            <person name="Gill S.R."/>
            <person name="Fouts D.E."/>
            <person name="Archer G.L."/>
            <person name="Mongodin E.F."/>
            <person name="DeBoy R.T."/>
            <person name="Ravel J."/>
            <person name="Paulsen I.T."/>
            <person name="Kolonay J.F."/>
            <person name="Brinkac L.M."/>
            <person name="Beanan M.J."/>
            <person name="Dodson R.J."/>
            <person name="Daugherty S.C."/>
            <person name="Madupu R."/>
            <person name="Angiuoli S.V."/>
            <person name="Durkin A.S."/>
            <person name="Haft D.H."/>
            <person name="Vamathevan J.J."/>
            <person name="Khouri H."/>
            <person name="Utterback T.R."/>
            <person name="Lee C."/>
            <person name="Dimitrov G."/>
            <person name="Jiang L."/>
            <person name="Qin H."/>
            <person name="Weidman J."/>
            <person name="Tran K."/>
            <person name="Kang K.H."/>
            <person name="Hance I.R."/>
            <person name="Nelson K.E."/>
            <person name="Fraser C.M."/>
        </authorList>
    </citation>
    <scope>NUCLEOTIDE SEQUENCE [LARGE SCALE GENOMIC DNA]</scope>
    <source>
        <strain>ATCC 35984 / DSM 28319 / BCRC 17069 / CCUG 31568 / BM 3577 / RP62A</strain>
    </source>
</reference>
<organism>
    <name type="scientific">Staphylococcus epidermidis (strain ATCC 35984 / DSM 28319 / BCRC 17069 / CCUG 31568 / BM 3577 / RP62A)</name>
    <dbReference type="NCBI Taxonomy" id="176279"/>
    <lineage>
        <taxon>Bacteria</taxon>
        <taxon>Bacillati</taxon>
        <taxon>Bacillota</taxon>
        <taxon>Bacilli</taxon>
        <taxon>Bacillales</taxon>
        <taxon>Staphylococcaceae</taxon>
        <taxon>Staphylococcus</taxon>
    </lineage>
</organism>
<protein>
    <recommendedName>
        <fullName>Purine nucleoside phosphorylase SERP0752</fullName>
        <ecNumber evidence="2">2.4.2.1</ecNumber>
    </recommendedName>
    <alternativeName>
        <fullName>Adenosine deaminase SERP0752</fullName>
        <ecNumber evidence="2">3.5.4.4</ecNumber>
    </alternativeName>
    <alternativeName>
        <fullName>S-methyl-5'-thioadenosine phosphorylase SERP0752</fullName>
        <ecNumber evidence="2">2.4.2.28</ecNumber>
    </alternativeName>
</protein>
<gene>
    <name type="ordered locus">SERP0752</name>
</gene>
<name>PURNU_STAEQ</name>
<accession>Q5HQ05</accession>
<proteinExistence type="inferred from homology"/>
<feature type="chain" id="PRO_0000163179" description="Purine nucleoside phosphorylase SERP0752">
    <location>
        <begin position="1"/>
        <end position="263"/>
    </location>
</feature>
<feature type="binding site" evidence="2">
    <location>
        <position position="79"/>
    </location>
    <ligand>
        <name>Zn(2+)</name>
        <dbReference type="ChEBI" id="CHEBI:29105"/>
        <note>catalytic</note>
    </ligand>
</feature>
<feature type="binding site" evidence="2">
    <location>
        <position position="124"/>
    </location>
    <ligand>
        <name>Zn(2+)</name>
        <dbReference type="ChEBI" id="CHEBI:29105"/>
        <note>catalytic</note>
    </ligand>
</feature>
<feature type="binding site" evidence="2">
    <location>
        <position position="141"/>
    </location>
    <ligand>
        <name>Zn(2+)</name>
        <dbReference type="ChEBI" id="CHEBI:29105"/>
        <note>catalytic</note>
    </ligand>
</feature>
<keyword id="KW-0186">Copper</keyword>
<keyword id="KW-0378">Hydrolase</keyword>
<keyword id="KW-0479">Metal-binding</keyword>
<keyword id="KW-0560">Oxidoreductase</keyword>
<keyword id="KW-1185">Reference proteome</keyword>
<keyword id="KW-0808">Transferase</keyword>
<keyword id="KW-0862">Zinc</keyword>